<dbReference type="EMBL" id="CP001349">
    <property type="protein sequence ID" value="ACL57770.1"/>
    <property type="molecule type" value="Genomic_DNA"/>
</dbReference>
<dbReference type="RefSeq" id="WP_015929445.1">
    <property type="nucleotide sequence ID" value="NC_011894.1"/>
</dbReference>
<dbReference type="SMR" id="B8IFN5"/>
<dbReference type="STRING" id="460265.Mnod_2819"/>
<dbReference type="KEGG" id="mno:Mnod_2819"/>
<dbReference type="eggNOG" id="COG1825">
    <property type="taxonomic scope" value="Bacteria"/>
</dbReference>
<dbReference type="HOGENOM" id="CLU_075939_0_0_5"/>
<dbReference type="OrthoDB" id="9806411at2"/>
<dbReference type="Proteomes" id="UP000008207">
    <property type="component" value="Chromosome"/>
</dbReference>
<dbReference type="GO" id="GO:0022625">
    <property type="term" value="C:cytosolic large ribosomal subunit"/>
    <property type="evidence" value="ECO:0007669"/>
    <property type="project" value="TreeGrafter"/>
</dbReference>
<dbReference type="GO" id="GO:0008097">
    <property type="term" value="F:5S rRNA binding"/>
    <property type="evidence" value="ECO:0007669"/>
    <property type="project" value="InterPro"/>
</dbReference>
<dbReference type="GO" id="GO:0003735">
    <property type="term" value="F:structural constituent of ribosome"/>
    <property type="evidence" value="ECO:0007669"/>
    <property type="project" value="InterPro"/>
</dbReference>
<dbReference type="GO" id="GO:0006412">
    <property type="term" value="P:translation"/>
    <property type="evidence" value="ECO:0007669"/>
    <property type="project" value="UniProtKB-UniRule"/>
</dbReference>
<dbReference type="CDD" id="cd00495">
    <property type="entry name" value="Ribosomal_L25_TL5_CTC"/>
    <property type="match status" value="1"/>
</dbReference>
<dbReference type="Gene3D" id="2.170.120.20">
    <property type="entry name" value="Ribosomal protein L25, beta domain"/>
    <property type="match status" value="1"/>
</dbReference>
<dbReference type="Gene3D" id="2.40.240.10">
    <property type="entry name" value="Ribosomal Protein L25, Chain P"/>
    <property type="match status" value="1"/>
</dbReference>
<dbReference type="HAMAP" id="MF_01334">
    <property type="entry name" value="Ribosomal_bL25_CTC"/>
    <property type="match status" value="1"/>
</dbReference>
<dbReference type="InterPro" id="IPR020056">
    <property type="entry name" value="Rbsml_bL25/Gln-tRNA_synth_N"/>
</dbReference>
<dbReference type="InterPro" id="IPR011035">
    <property type="entry name" value="Ribosomal_bL25/Gln-tRNA_synth"/>
</dbReference>
<dbReference type="InterPro" id="IPR020057">
    <property type="entry name" value="Ribosomal_bL25_b-dom"/>
</dbReference>
<dbReference type="InterPro" id="IPR037121">
    <property type="entry name" value="Ribosomal_bL25_C"/>
</dbReference>
<dbReference type="InterPro" id="IPR001021">
    <property type="entry name" value="Ribosomal_bL25_long"/>
</dbReference>
<dbReference type="InterPro" id="IPR029751">
    <property type="entry name" value="Ribosomal_L25_dom"/>
</dbReference>
<dbReference type="InterPro" id="IPR020930">
    <property type="entry name" value="Ribosomal_uL5_bac-type"/>
</dbReference>
<dbReference type="NCBIfam" id="TIGR00731">
    <property type="entry name" value="bL25_bact_ctc"/>
    <property type="match status" value="1"/>
</dbReference>
<dbReference type="NCBIfam" id="NF004128">
    <property type="entry name" value="PRK05618.1-2"/>
    <property type="match status" value="1"/>
</dbReference>
<dbReference type="PANTHER" id="PTHR33284">
    <property type="entry name" value="RIBOSOMAL PROTEIN L25/GLN-TRNA SYNTHETASE, ANTI-CODON-BINDING DOMAIN-CONTAINING PROTEIN"/>
    <property type="match status" value="1"/>
</dbReference>
<dbReference type="PANTHER" id="PTHR33284:SF1">
    <property type="entry name" value="RIBOSOMAL PROTEIN L25_GLN-TRNA SYNTHETASE, ANTI-CODON-BINDING DOMAIN-CONTAINING PROTEIN"/>
    <property type="match status" value="1"/>
</dbReference>
<dbReference type="Pfam" id="PF01386">
    <property type="entry name" value="Ribosomal_L25p"/>
    <property type="match status" value="1"/>
</dbReference>
<dbReference type="Pfam" id="PF14693">
    <property type="entry name" value="Ribosomal_TL5_C"/>
    <property type="match status" value="1"/>
</dbReference>
<dbReference type="SUPFAM" id="SSF50715">
    <property type="entry name" value="Ribosomal protein L25-like"/>
    <property type="match status" value="1"/>
</dbReference>
<name>RL25_METNO</name>
<evidence type="ECO:0000255" key="1">
    <source>
        <dbReference type="HAMAP-Rule" id="MF_01334"/>
    </source>
</evidence>
<evidence type="ECO:0000305" key="2"/>
<accession>B8IFN5</accession>
<reference key="1">
    <citation type="submission" date="2009-01" db="EMBL/GenBank/DDBJ databases">
        <title>Complete sequence of chromosome of Methylobacterium nodulans ORS 2060.</title>
        <authorList>
            <consortium name="US DOE Joint Genome Institute"/>
            <person name="Lucas S."/>
            <person name="Copeland A."/>
            <person name="Lapidus A."/>
            <person name="Glavina del Rio T."/>
            <person name="Dalin E."/>
            <person name="Tice H."/>
            <person name="Bruce D."/>
            <person name="Goodwin L."/>
            <person name="Pitluck S."/>
            <person name="Sims D."/>
            <person name="Brettin T."/>
            <person name="Detter J.C."/>
            <person name="Han C."/>
            <person name="Larimer F."/>
            <person name="Land M."/>
            <person name="Hauser L."/>
            <person name="Kyrpides N."/>
            <person name="Ivanova N."/>
            <person name="Marx C.J."/>
            <person name="Richardson P."/>
        </authorList>
    </citation>
    <scope>NUCLEOTIDE SEQUENCE [LARGE SCALE GENOMIC DNA]</scope>
    <source>
        <strain>LMG 21967 / CNCM I-2342 / ORS 2060</strain>
    </source>
</reference>
<protein>
    <recommendedName>
        <fullName evidence="1">Large ribosomal subunit protein bL25</fullName>
    </recommendedName>
    <alternativeName>
        <fullName evidence="2">50S ribosomal protein L25</fullName>
    </alternativeName>
    <alternativeName>
        <fullName evidence="1">General stress protein CTC</fullName>
    </alternativeName>
</protein>
<feature type="chain" id="PRO_1000166177" description="Large ribosomal subunit protein bL25">
    <location>
        <begin position="1"/>
        <end position="211"/>
    </location>
</feature>
<organism>
    <name type="scientific">Methylobacterium nodulans (strain LMG 21967 / CNCM I-2342 / ORS 2060)</name>
    <dbReference type="NCBI Taxonomy" id="460265"/>
    <lineage>
        <taxon>Bacteria</taxon>
        <taxon>Pseudomonadati</taxon>
        <taxon>Pseudomonadota</taxon>
        <taxon>Alphaproteobacteria</taxon>
        <taxon>Hyphomicrobiales</taxon>
        <taxon>Methylobacteriaceae</taxon>
        <taxon>Methylobacterium</taxon>
    </lineage>
</organism>
<keyword id="KW-1185">Reference proteome</keyword>
<keyword id="KW-0687">Ribonucleoprotein</keyword>
<keyword id="KW-0689">Ribosomal protein</keyword>
<keyword id="KW-0694">RNA-binding</keyword>
<keyword id="KW-0699">rRNA-binding</keyword>
<gene>
    <name evidence="1" type="primary">rplY</name>
    <name evidence="1" type="synonym">ctc</name>
    <name type="ordered locus">Mnod_2819</name>
</gene>
<sequence>MSAVKPLEAVARDRVGKGAARAVRRQGRVPAVIYGGGQSPQSISLDANQTHHLIYGGGFLTTVFEIEVGGRKIRAIPRDYQLDPVKDLPLHVDFLRVTAGQTVAVEVPVHFVNQDAAPGLKQKSGMLNVVHHTVALEVSPDAIPDAIDVDLTGKDIGDTIHVSDLALPAGASLALDPSETVATLVPPTVLPAAAEEAAVSEAAPAETTKEG</sequence>
<comment type="function">
    <text evidence="1">This is one of the proteins that binds to the 5S RNA in the ribosome where it forms part of the central protuberance.</text>
</comment>
<comment type="subunit">
    <text evidence="1">Part of the 50S ribosomal subunit; part of the 5S rRNA/L5/L18/L25 subcomplex. Contacts the 5S rRNA. Binds to the 5S rRNA independently of L5 and L18.</text>
</comment>
<comment type="similarity">
    <text evidence="1">Belongs to the bacterial ribosomal protein bL25 family. CTC subfamily.</text>
</comment>
<proteinExistence type="inferred from homology"/>